<proteinExistence type="inferred from homology"/>
<organism>
    <name type="scientific">Xanthomonas oryzae pv. oryzae (strain KACC10331 / KXO85)</name>
    <dbReference type="NCBI Taxonomy" id="291331"/>
    <lineage>
        <taxon>Bacteria</taxon>
        <taxon>Pseudomonadati</taxon>
        <taxon>Pseudomonadota</taxon>
        <taxon>Gammaproteobacteria</taxon>
        <taxon>Lysobacterales</taxon>
        <taxon>Lysobacteraceae</taxon>
        <taxon>Xanthomonas</taxon>
    </lineage>
</organism>
<keyword id="KW-0963">Cytoplasm</keyword>
<keyword id="KW-0269">Exonuclease</keyword>
<keyword id="KW-0378">Hydrolase</keyword>
<keyword id="KW-0540">Nuclease</keyword>
<keyword id="KW-1185">Reference proteome</keyword>
<reference key="1">
    <citation type="journal article" date="2005" name="Nucleic Acids Res.">
        <title>The genome sequence of Xanthomonas oryzae pathovar oryzae KACC10331, the bacterial blight pathogen of rice.</title>
        <authorList>
            <person name="Lee B.-M."/>
            <person name="Park Y.-J."/>
            <person name="Park D.-S."/>
            <person name="Kang H.-W."/>
            <person name="Kim J.-G."/>
            <person name="Song E.-S."/>
            <person name="Park I.-C."/>
            <person name="Yoon U.-H."/>
            <person name="Hahn J.-H."/>
            <person name="Koo B.-S."/>
            <person name="Lee G.-B."/>
            <person name="Kim H."/>
            <person name="Park H.-S."/>
            <person name="Yoon K.-O."/>
            <person name="Kim J.-H."/>
            <person name="Jung C.-H."/>
            <person name="Koh N.-H."/>
            <person name="Seo J.-S."/>
            <person name="Go S.-J."/>
        </authorList>
    </citation>
    <scope>NUCLEOTIDE SEQUENCE [LARGE SCALE GENOMIC DNA]</scope>
    <source>
        <strain>KACC10331 / KXO85</strain>
    </source>
</reference>
<evidence type="ECO:0000255" key="1">
    <source>
        <dbReference type="HAMAP-Rule" id="MF_00378"/>
    </source>
</evidence>
<evidence type="ECO:0000305" key="2"/>
<dbReference type="EC" id="3.1.11.6" evidence="1"/>
<dbReference type="EMBL" id="AE013598">
    <property type="protein sequence ID" value="AAW75991.1"/>
    <property type="status" value="ALT_INIT"/>
    <property type="molecule type" value="Genomic_DNA"/>
</dbReference>
<dbReference type="SMR" id="Q5GZ80"/>
<dbReference type="STRING" id="291331.XOO2737"/>
<dbReference type="KEGG" id="xoo:XOO2737"/>
<dbReference type="PATRIC" id="fig|291331.8.peg.3025"/>
<dbReference type="HOGENOM" id="CLU_023625_3_1_6"/>
<dbReference type="Proteomes" id="UP000006735">
    <property type="component" value="Chromosome"/>
</dbReference>
<dbReference type="GO" id="GO:0005737">
    <property type="term" value="C:cytoplasm"/>
    <property type="evidence" value="ECO:0007669"/>
    <property type="project" value="UniProtKB-SubCell"/>
</dbReference>
<dbReference type="GO" id="GO:0009318">
    <property type="term" value="C:exodeoxyribonuclease VII complex"/>
    <property type="evidence" value="ECO:0007669"/>
    <property type="project" value="InterPro"/>
</dbReference>
<dbReference type="GO" id="GO:0008855">
    <property type="term" value="F:exodeoxyribonuclease VII activity"/>
    <property type="evidence" value="ECO:0007669"/>
    <property type="project" value="UniProtKB-UniRule"/>
</dbReference>
<dbReference type="GO" id="GO:0003676">
    <property type="term" value="F:nucleic acid binding"/>
    <property type="evidence" value="ECO:0007669"/>
    <property type="project" value="InterPro"/>
</dbReference>
<dbReference type="GO" id="GO:0006308">
    <property type="term" value="P:DNA catabolic process"/>
    <property type="evidence" value="ECO:0007669"/>
    <property type="project" value="UniProtKB-UniRule"/>
</dbReference>
<dbReference type="CDD" id="cd04489">
    <property type="entry name" value="ExoVII_LU_OBF"/>
    <property type="match status" value="1"/>
</dbReference>
<dbReference type="HAMAP" id="MF_00378">
    <property type="entry name" value="Exonuc_7_L"/>
    <property type="match status" value="1"/>
</dbReference>
<dbReference type="InterPro" id="IPR003753">
    <property type="entry name" value="Exonuc_VII_L"/>
</dbReference>
<dbReference type="InterPro" id="IPR020579">
    <property type="entry name" value="Exonuc_VII_lsu_C"/>
</dbReference>
<dbReference type="InterPro" id="IPR025824">
    <property type="entry name" value="OB-fold_nuc-bd_dom"/>
</dbReference>
<dbReference type="NCBIfam" id="TIGR00237">
    <property type="entry name" value="xseA"/>
    <property type="match status" value="1"/>
</dbReference>
<dbReference type="PANTHER" id="PTHR30008">
    <property type="entry name" value="EXODEOXYRIBONUCLEASE 7 LARGE SUBUNIT"/>
    <property type="match status" value="1"/>
</dbReference>
<dbReference type="PANTHER" id="PTHR30008:SF0">
    <property type="entry name" value="EXODEOXYRIBONUCLEASE 7 LARGE SUBUNIT"/>
    <property type="match status" value="1"/>
</dbReference>
<dbReference type="Pfam" id="PF02601">
    <property type="entry name" value="Exonuc_VII_L"/>
    <property type="match status" value="1"/>
</dbReference>
<dbReference type="Pfam" id="PF13742">
    <property type="entry name" value="tRNA_anti_2"/>
    <property type="match status" value="1"/>
</dbReference>
<name>EX7L_XANOR</name>
<accession>Q5GZ80</accession>
<feature type="chain" id="PRO_0000273703" description="Exodeoxyribonuclease 7 large subunit">
    <location>
        <begin position="1"/>
        <end position="445"/>
    </location>
</feature>
<gene>
    <name evidence="1" type="primary">xseA</name>
    <name type="ordered locus">XOO2737</name>
</gene>
<comment type="function">
    <text evidence="1">Bidirectionally degrades single-stranded DNA into large acid-insoluble oligonucleotides, which are then degraded further into small acid-soluble oligonucleotides.</text>
</comment>
<comment type="catalytic activity">
    <reaction evidence="1">
        <text>Exonucleolytic cleavage in either 5'- to 3'- or 3'- to 5'-direction to yield nucleoside 5'-phosphates.</text>
        <dbReference type="EC" id="3.1.11.6"/>
    </reaction>
</comment>
<comment type="subunit">
    <text evidence="1">Heterooligomer composed of large and small subunits.</text>
</comment>
<comment type="subcellular location">
    <subcellularLocation>
        <location evidence="1">Cytoplasm</location>
    </subcellularLocation>
</comment>
<comment type="similarity">
    <text evidence="1">Belongs to the XseA family.</text>
</comment>
<comment type="sequence caution" evidence="2">
    <conflict type="erroneous initiation">
        <sequence resource="EMBL-CDS" id="AAW75991"/>
    </conflict>
</comment>
<protein>
    <recommendedName>
        <fullName evidence="1">Exodeoxyribonuclease 7 large subunit</fullName>
        <ecNumber evidence="1">3.1.11.6</ecNumber>
    </recommendedName>
    <alternativeName>
        <fullName evidence="1">Exodeoxyribonuclease VII large subunit</fullName>
        <shortName evidence="1">Exonuclease VII large subunit</shortName>
    </alternativeName>
</protein>
<sequence length="445" mass="49198">MAERNEQILTPSQLNALARDLLEGSFPLVWVEAELSSVTRPSSGHLYFTLKDARAQIRCAMFKPKSTWLKFQPREGLRVLARGRLTLYEARGDYQLVLDHMEEAGEGALRRAFDALRARLAAEGLFDAERKQSLPAHVQRLAVITSPSGAAVRDVLSVLARRFPLLEVDLLPSLVQGDSAAAQITSLLQRADASGRYDVILITRGGGSLEDLWAFNDERLARAIAAAQTPVVSAVGHETDFSLSDFVADVRAPTPSVAAELLVPDQRELVARVRRAQARMTQLQQHALGNAMQRADRLALRLRAHSPQARLQLLHRRQEEAGRQLGARMTQVLERLQARVQRGHAQVQSHNPQRHLAGLQQRLRALHPQAAMQRRLQHDQLQLRSIARSLEAVNPLATVARGYAIVTRPADGSVVRSAAEVAAGERLRAQLADGSIEVRVEPGER</sequence>